<proteinExistence type="inferred from homology"/>
<accession>Q0HXF8</accession>
<dbReference type="EC" id="6.1.1.7" evidence="1"/>
<dbReference type="EMBL" id="CP000444">
    <property type="protein sequence ID" value="ABI42197.1"/>
    <property type="molecule type" value="Genomic_DNA"/>
</dbReference>
<dbReference type="SMR" id="Q0HXF8"/>
<dbReference type="KEGG" id="shm:Shewmr7_1198"/>
<dbReference type="HOGENOM" id="CLU_004485_1_1_6"/>
<dbReference type="GO" id="GO:0005829">
    <property type="term" value="C:cytosol"/>
    <property type="evidence" value="ECO:0007669"/>
    <property type="project" value="TreeGrafter"/>
</dbReference>
<dbReference type="GO" id="GO:0004813">
    <property type="term" value="F:alanine-tRNA ligase activity"/>
    <property type="evidence" value="ECO:0007669"/>
    <property type="project" value="UniProtKB-UniRule"/>
</dbReference>
<dbReference type="GO" id="GO:0002161">
    <property type="term" value="F:aminoacyl-tRNA deacylase activity"/>
    <property type="evidence" value="ECO:0007669"/>
    <property type="project" value="TreeGrafter"/>
</dbReference>
<dbReference type="GO" id="GO:0005524">
    <property type="term" value="F:ATP binding"/>
    <property type="evidence" value="ECO:0007669"/>
    <property type="project" value="UniProtKB-UniRule"/>
</dbReference>
<dbReference type="GO" id="GO:0000049">
    <property type="term" value="F:tRNA binding"/>
    <property type="evidence" value="ECO:0007669"/>
    <property type="project" value="UniProtKB-KW"/>
</dbReference>
<dbReference type="GO" id="GO:0008270">
    <property type="term" value="F:zinc ion binding"/>
    <property type="evidence" value="ECO:0007669"/>
    <property type="project" value="UniProtKB-UniRule"/>
</dbReference>
<dbReference type="GO" id="GO:0006419">
    <property type="term" value="P:alanyl-tRNA aminoacylation"/>
    <property type="evidence" value="ECO:0007669"/>
    <property type="project" value="UniProtKB-UniRule"/>
</dbReference>
<dbReference type="GO" id="GO:0045892">
    <property type="term" value="P:negative regulation of DNA-templated transcription"/>
    <property type="evidence" value="ECO:0007669"/>
    <property type="project" value="TreeGrafter"/>
</dbReference>
<dbReference type="CDD" id="cd00673">
    <property type="entry name" value="AlaRS_core"/>
    <property type="match status" value="1"/>
</dbReference>
<dbReference type="FunFam" id="2.40.30.130:FF:000001">
    <property type="entry name" value="Alanine--tRNA ligase"/>
    <property type="match status" value="1"/>
</dbReference>
<dbReference type="FunFam" id="3.10.310.40:FF:000001">
    <property type="entry name" value="Alanine--tRNA ligase"/>
    <property type="match status" value="1"/>
</dbReference>
<dbReference type="FunFam" id="3.30.54.20:FF:000001">
    <property type="entry name" value="Alanine--tRNA ligase"/>
    <property type="match status" value="1"/>
</dbReference>
<dbReference type="FunFam" id="3.30.930.10:FF:000004">
    <property type="entry name" value="Alanine--tRNA ligase"/>
    <property type="match status" value="1"/>
</dbReference>
<dbReference type="FunFam" id="3.30.980.10:FF:000004">
    <property type="entry name" value="Alanine--tRNA ligase, cytoplasmic"/>
    <property type="match status" value="1"/>
</dbReference>
<dbReference type="Gene3D" id="2.40.30.130">
    <property type="match status" value="1"/>
</dbReference>
<dbReference type="Gene3D" id="3.10.310.40">
    <property type="match status" value="1"/>
</dbReference>
<dbReference type="Gene3D" id="3.30.54.20">
    <property type="match status" value="1"/>
</dbReference>
<dbReference type="Gene3D" id="6.10.250.550">
    <property type="match status" value="1"/>
</dbReference>
<dbReference type="Gene3D" id="3.30.930.10">
    <property type="entry name" value="Bira Bifunctional Protein, Domain 2"/>
    <property type="match status" value="1"/>
</dbReference>
<dbReference type="Gene3D" id="3.30.980.10">
    <property type="entry name" value="Threonyl-trna Synthetase, Chain A, domain 2"/>
    <property type="match status" value="1"/>
</dbReference>
<dbReference type="HAMAP" id="MF_00036_B">
    <property type="entry name" value="Ala_tRNA_synth_B"/>
    <property type="match status" value="1"/>
</dbReference>
<dbReference type="InterPro" id="IPR045864">
    <property type="entry name" value="aa-tRNA-synth_II/BPL/LPL"/>
</dbReference>
<dbReference type="InterPro" id="IPR002318">
    <property type="entry name" value="Ala-tRNA-lgiase_IIc"/>
</dbReference>
<dbReference type="InterPro" id="IPR018162">
    <property type="entry name" value="Ala-tRNA-ligase_IIc_anticod-bd"/>
</dbReference>
<dbReference type="InterPro" id="IPR018165">
    <property type="entry name" value="Ala-tRNA-synth_IIc_core"/>
</dbReference>
<dbReference type="InterPro" id="IPR018164">
    <property type="entry name" value="Ala-tRNA-synth_IIc_N"/>
</dbReference>
<dbReference type="InterPro" id="IPR050058">
    <property type="entry name" value="Ala-tRNA_ligase"/>
</dbReference>
<dbReference type="InterPro" id="IPR023033">
    <property type="entry name" value="Ala_tRNA_ligase_euk/bac"/>
</dbReference>
<dbReference type="InterPro" id="IPR003156">
    <property type="entry name" value="DHHA1_dom"/>
</dbReference>
<dbReference type="InterPro" id="IPR018163">
    <property type="entry name" value="Thr/Ala-tRNA-synth_IIc_edit"/>
</dbReference>
<dbReference type="InterPro" id="IPR009000">
    <property type="entry name" value="Transl_B-barrel_sf"/>
</dbReference>
<dbReference type="InterPro" id="IPR012947">
    <property type="entry name" value="tRNA_SAD"/>
</dbReference>
<dbReference type="NCBIfam" id="TIGR00344">
    <property type="entry name" value="alaS"/>
    <property type="match status" value="1"/>
</dbReference>
<dbReference type="PANTHER" id="PTHR11777:SF9">
    <property type="entry name" value="ALANINE--TRNA LIGASE, CYTOPLASMIC"/>
    <property type="match status" value="1"/>
</dbReference>
<dbReference type="PANTHER" id="PTHR11777">
    <property type="entry name" value="ALANYL-TRNA SYNTHETASE"/>
    <property type="match status" value="1"/>
</dbReference>
<dbReference type="Pfam" id="PF02272">
    <property type="entry name" value="DHHA1"/>
    <property type="match status" value="1"/>
</dbReference>
<dbReference type="Pfam" id="PF01411">
    <property type="entry name" value="tRNA-synt_2c"/>
    <property type="match status" value="1"/>
</dbReference>
<dbReference type="Pfam" id="PF07973">
    <property type="entry name" value="tRNA_SAD"/>
    <property type="match status" value="1"/>
</dbReference>
<dbReference type="PRINTS" id="PR00980">
    <property type="entry name" value="TRNASYNTHALA"/>
</dbReference>
<dbReference type="SMART" id="SM00863">
    <property type="entry name" value="tRNA_SAD"/>
    <property type="match status" value="1"/>
</dbReference>
<dbReference type="SUPFAM" id="SSF55681">
    <property type="entry name" value="Class II aaRS and biotin synthetases"/>
    <property type="match status" value="1"/>
</dbReference>
<dbReference type="SUPFAM" id="SSF101353">
    <property type="entry name" value="Putative anticodon-binding domain of alanyl-tRNA synthetase (AlaRS)"/>
    <property type="match status" value="1"/>
</dbReference>
<dbReference type="SUPFAM" id="SSF55186">
    <property type="entry name" value="ThrRS/AlaRS common domain"/>
    <property type="match status" value="1"/>
</dbReference>
<dbReference type="SUPFAM" id="SSF50447">
    <property type="entry name" value="Translation proteins"/>
    <property type="match status" value="1"/>
</dbReference>
<dbReference type="PROSITE" id="PS50860">
    <property type="entry name" value="AA_TRNA_LIGASE_II_ALA"/>
    <property type="match status" value="1"/>
</dbReference>
<evidence type="ECO:0000255" key="1">
    <source>
        <dbReference type="HAMAP-Rule" id="MF_00036"/>
    </source>
</evidence>
<organism>
    <name type="scientific">Shewanella sp. (strain MR-7)</name>
    <dbReference type="NCBI Taxonomy" id="60481"/>
    <lineage>
        <taxon>Bacteria</taxon>
        <taxon>Pseudomonadati</taxon>
        <taxon>Pseudomonadota</taxon>
        <taxon>Gammaproteobacteria</taxon>
        <taxon>Alteromonadales</taxon>
        <taxon>Shewanellaceae</taxon>
        <taxon>Shewanella</taxon>
    </lineage>
</organism>
<sequence>MYQTTAALRSAFLEFFRSNGHQVVDSSSLVPGNDPTLLFTNAGMNQFKDVFLGMDKRSYTRATTAQRCVRAGGKHNDLDNVGYTARHHTFFEMLGNFSFGDYFKEDAIRFGWTFLTEVLKLPKERLCVTVYQTDDEAFEIWNKKIGVAAENIIRIGDNKGAPYASDNFWQMGDTGPCGPCTEIFYDHGDHIWGGRPGSPEEDGDRFIEIWNIVFMQYNRQASGEMLPLPKPSVDTGMGIERIAAIMQGVHSNYEIDIFRALIAKAAEIIGVTDLSNKSLRVIADHIRSCAFLVADGVMPSNEGRGYVLRRIIRRAVRHGNKLGATEAFFYKLVPTLIEVMGDAAKGLADTQVIVEKALKAEEEQFARTLERGLGILDSALNELQGDTLDGETVFKLYDTYGFPVDLTADVCRERNIIVDEAGFEAAMAEQRSRAQAAGNFGADYNAALKIDAETAFCGYSELTGNAKVTALYLNGESVPAINAGDDAVVVLDVTPFYAESGGQVGDKGVLVAQGIEFAVSDTQKFGQASGHKGTLTAGSLSVGQVLEAKVDKKLRHRTQLNHSVTHLLHAALRQVLGTHVTQKGSLVDPERLRFDFSHFEAVKPAELKQVEELVNTQIRRNHELKVAEMAIDEAKEKGAMALFGEKYDAQVRVVTMGDFSIELCGGTHVGRTGDIGLFKITSEGGIAAGVRRIEAVTGAAAMAYVAQQQAQLEEAAALLKGDTQSVVAKLKVQLDKMKQLEKDMQQLKDKLAAAASADLAGDAVVVNGVNVLIKKLEGVEAGALRGLQDELKQKLKSAVILLGVAQEGKVNLIAGVSNDLVGKVKAGELVAMVAAQVGGKGGGRPDMAQAGGSQPENLDAALSQVLPWITERLA</sequence>
<keyword id="KW-0030">Aminoacyl-tRNA synthetase</keyword>
<keyword id="KW-0067">ATP-binding</keyword>
<keyword id="KW-0963">Cytoplasm</keyword>
<keyword id="KW-0436">Ligase</keyword>
<keyword id="KW-0479">Metal-binding</keyword>
<keyword id="KW-0547">Nucleotide-binding</keyword>
<keyword id="KW-0648">Protein biosynthesis</keyword>
<keyword id="KW-0694">RNA-binding</keyword>
<keyword id="KW-0820">tRNA-binding</keyword>
<keyword id="KW-0862">Zinc</keyword>
<name>SYA_SHESR</name>
<comment type="function">
    <text evidence="1">Catalyzes the attachment of alanine to tRNA(Ala) in a two-step reaction: alanine is first activated by ATP to form Ala-AMP and then transferred to the acceptor end of tRNA(Ala). Also edits incorrectly charged Ser-tRNA(Ala) and Gly-tRNA(Ala) via its editing domain.</text>
</comment>
<comment type="catalytic activity">
    <reaction evidence="1">
        <text>tRNA(Ala) + L-alanine + ATP = L-alanyl-tRNA(Ala) + AMP + diphosphate</text>
        <dbReference type="Rhea" id="RHEA:12540"/>
        <dbReference type="Rhea" id="RHEA-COMP:9657"/>
        <dbReference type="Rhea" id="RHEA-COMP:9923"/>
        <dbReference type="ChEBI" id="CHEBI:30616"/>
        <dbReference type="ChEBI" id="CHEBI:33019"/>
        <dbReference type="ChEBI" id="CHEBI:57972"/>
        <dbReference type="ChEBI" id="CHEBI:78442"/>
        <dbReference type="ChEBI" id="CHEBI:78497"/>
        <dbReference type="ChEBI" id="CHEBI:456215"/>
        <dbReference type="EC" id="6.1.1.7"/>
    </reaction>
</comment>
<comment type="cofactor">
    <cofactor evidence="1">
        <name>Zn(2+)</name>
        <dbReference type="ChEBI" id="CHEBI:29105"/>
    </cofactor>
    <text evidence="1">Binds 1 zinc ion per subunit.</text>
</comment>
<comment type="subcellular location">
    <subcellularLocation>
        <location evidence="1">Cytoplasm</location>
    </subcellularLocation>
</comment>
<comment type="domain">
    <text evidence="1">Consists of three domains; the N-terminal catalytic domain, the editing domain and the C-terminal C-Ala domain. The editing domain removes incorrectly charged amino acids, while the C-Ala domain, along with tRNA(Ala), serves as a bridge to cooperatively bring together the editing and aminoacylation centers thus stimulating deacylation of misacylated tRNAs.</text>
</comment>
<comment type="similarity">
    <text evidence="1">Belongs to the class-II aminoacyl-tRNA synthetase family.</text>
</comment>
<gene>
    <name evidence="1" type="primary">alaS</name>
    <name type="ordered locus">Shewmr7_1198</name>
</gene>
<feature type="chain" id="PRO_0000347793" description="Alanine--tRNA ligase">
    <location>
        <begin position="1"/>
        <end position="874"/>
    </location>
</feature>
<feature type="binding site" evidence="1">
    <location>
        <position position="562"/>
    </location>
    <ligand>
        <name>Zn(2+)</name>
        <dbReference type="ChEBI" id="CHEBI:29105"/>
    </ligand>
</feature>
<feature type="binding site" evidence="1">
    <location>
        <position position="566"/>
    </location>
    <ligand>
        <name>Zn(2+)</name>
        <dbReference type="ChEBI" id="CHEBI:29105"/>
    </ligand>
</feature>
<feature type="binding site" evidence="1">
    <location>
        <position position="664"/>
    </location>
    <ligand>
        <name>Zn(2+)</name>
        <dbReference type="ChEBI" id="CHEBI:29105"/>
    </ligand>
</feature>
<feature type="binding site" evidence="1">
    <location>
        <position position="668"/>
    </location>
    <ligand>
        <name>Zn(2+)</name>
        <dbReference type="ChEBI" id="CHEBI:29105"/>
    </ligand>
</feature>
<protein>
    <recommendedName>
        <fullName evidence="1">Alanine--tRNA ligase</fullName>
        <ecNumber evidence="1">6.1.1.7</ecNumber>
    </recommendedName>
    <alternativeName>
        <fullName evidence="1">Alanyl-tRNA synthetase</fullName>
        <shortName evidence="1">AlaRS</shortName>
    </alternativeName>
</protein>
<reference key="1">
    <citation type="submission" date="2006-08" db="EMBL/GenBank/DDBJ databases">
        <title>Complete sequence of chromosome 1 of Shewanella sp. MR-7.</title>
        <authorList>
            <person name="Copeland A."/>
            <person name="Lucas S."/>
            <person name="Lapidus A."/>
            <person name="Barry K."/>
            <person name="Detter J.C."/>
            <person name="Glavina del Rio T."/>
            <person name="Hammon N."/>
            <person name="Israni S."/>
            <person name="Dalin E."/>
            <person name="Tice H."/>
            <person name="Pitluck S."/>
            <person name="Kiss H."/>
            <person name="Brettin T."/>
            <person name="Bruce D."/>
            <person name="Han C."/>
            <person name="Tapia R."/>
            <person name="Gilna P."/>
            <person name="Schmutz J."/>
            <person name="Larimer F."/>
            <person name="Land M."/>
            <person name="Hauser L."/>
            <person name="Kyrpides N."/>
            <person name="Mikhailova N."/>
            <person name="Nealson K."/>
            <person name="Konstantinidis K."/>
            <person name="Klappenbach J."/>
            <person name="Tiedje J."/>
            <person name="Richardson P."/>
        </authorList>
    </citation>
    <scope>NUCLEOTIDE SEQUENCE [LARGE SCALE GENOMIC DNA]</scope>
    <source>
        <strain>MR-7</strain>
    </source>
</reference>